<organism>
    <name type="scientific">Emericella nidulans</name>
    <name type="common">Aspergillus nidulans</name>
    <dbReference type="NCBI Taxonomy" id="162425"/>
    <lineage>
        <taxon>Eukaryota</taxon>
        <taxon>Fungi</taxon>
        <taxon>Dikarya</taxon>
        <taxon>Ascomycota</taxon>
        <taxon>Pezizomycotina</taxon>
        <taxon>Eurotiomycetes</taxon>
        <taxon>Eurotiomycetidae</taxon>
        <taxon>Eurotiales</taxon>
        <taxon>Aspergillaceae</taxon>
        <taxon>Aspergillus</taxon>
        <taxon>Aspergillus subgen. Nidulantes</taxon>
    </lineage>
</organism>
<gene>
    <name evidence="8" type="primary">atrC</name>
</gene>
<proteinExistence type="evidence at transcript level"/>
<sequence>MKSTAESKETPSQDESTTSVPCTEAPLVEEGEEASFGAYKRIFTFAGRTELILQAVAILAACASGAGIALQNLIFGQFVTVITDFTNGISTPADFRDNAAELALYFVYLGIARLVLSYTYNTLLTYAAYRIVRNIRHAYLKAALSQEVAYYDFGSGGSIAAQATSNGKLIQAGASDKIGLLFQGLAAFVTLSLSRLWCKWKLTLICICIPVATIGTTGVVAAVEAGHETRILQIHAQANSFAEGILAGVKAVHAFGMRDSLVRKFDEYLVEAHKVGKKISPLLGLLFSAEYTIIYLGYGLAFWQGIHMFGRGEIGTAGDIFTVLLSVVIASINLTLLAPYSIEFSRAASAAAQLFRLIDRESEINPYGKEGLEPERVLGDVELENVTFSYPTRPGITVLDNFSLKVPAGKVTALVGQSGSGKSTIVGLLERWYNPTSGAIRLDGNLISELNVGWLRRNVRLVQQEPVLFQGSVFDNIRYGLVGTPWENASREEQMERVQEAAKLAYAHEFISELTDGYDTLIGERGGLLSGGQKQRVAIARSVVSQPKVLLLDEATSALDPHAETIVQKALDKAAEGRTTIVIAHKLATIRKADNIVVMSKGHIVEQGTHESLIAKDGVYAGLVKIQNLAVNASAHDNVNEEGEGEDVALLEVTETAVTRYPTSIRGRMNSIKDRDDYENHKHMDMLAALAYLVRECPELKWAYLVVLLGCLGGCAMYPGQAILMSRVVEVFTLSGDAMLDKGDFYASMLIVLAAGCLICYLAVGYATNTIAQHLSHWFRRLILHDMLRQDIQFFDREENTTGALVSRIDSYPHAILELMGYNIALVVIAVLQVVTCGILAIAFSWKLGLVVVFGGIPPLVGAGMVRIRVDSRLDRQTSKKYGTSSSIASEAVNAIRTVSSLAIEETVLRRYTEELDHAVSSSVKPMAATMICFGLTQCIEYWFQALGFWYGCRLVSLGETSMYSFFVAFLSVFFAGQASAQLFQWSTSITKGINATNYIAWLHQLQPTVRETPENHDKGPGSGAPIAMDNVRFSYPLRPDAPILKGVNLKINKGQFIAFVGSSGCGKSTMIAMLERFYDPTTGSITIDASTLTDINPISYRNIVALVQQEPTLFQGTIRDNISLGVFNPNTQPFFSDKDAVKSVSDEQIESALRAANAWDFVSSLPQGIYTPAGSGGSQLSGGQRQRIAIARALIRDPKILLLDEATSALDTESEKIVQKALEGAARDGDRLTVAVAHRLSTIKDANVICVFFGGKIAEMGTHQELIVRGGLYRRMCEAQALD</sequence>
<reference key="1">
    <citation type="journal article" date="2000" name="Mol. Gen. Genet.">
        <title>The role of ABC transporters from Aspergillus nidulans in protection against cytotoxic agents and in antibiotic production.</title>
        <authorList>
            <person name="Andrade A.C."/>
            <person name="Van Nistelrooy J.G."/>
            <person name="Peery R.B."/>
            <person name="Skatrud P.L."/>
            <person name="De Waard M.A."/>
        </authorList>
    </citation>
    <scope>NUCLEOTIDE SEQUENCE [GENOMIC DNA]</scope>
    <scope>FUNCTION</scope>
    <scope>INDUCTION</scope>
    <source>
        <strain>W6-096</strain>
    </source>
</reference>
<reference key="2">
    <citation type="journal article" date="2002" name="Appl. Environ. Microbiol.">
        <title>Quantitative analysis of the relative transcript levels of ABC transporter Atr genes in Aspergillus nidulans by real-time reverse transcription-PCR assay.</title>
        <authorList>
            <person name="Semighini C.P."/>
            <person name="Marins M."/>
            <person name="Goldman M.H."/>
            <person name="Goldman G.H."/>
        </authorList>
    </citation>
    <scope>INDUCTION</scope>
</reference>
<feature type="chain" id="PRO_0000449465" description="ABC multidrug transporter atrC">
    <location>
        <begin position="1"/>
        <end position="1284"/>
    </location>
</feature>
<feature type="transmembrane region" description="Helical" evidence="1 3">
    <location>
        <begin position="55"/>
        <end position="75"/>
    </location>
</feature>
<feature type="transmembrane region" description="Helical" evidence="1 3">
    <location>
        <begin position="99"/>
        <end position="119"/>
    </location>
</feature>
<feature type="transmembrane region" description="Helical" evidence="1 3">
    <location>
        <begin position="178"/>
        <end position="198"/>
    </location>
</feature>
<feature type="transmembrane region" description="Helical" evidence="1 3">
    <location>
        <begin position="203"/>
        <end position="223"/>
    </location>
</feature>
<feature type="transmembrane region" description="Helical" evidence="1 3">
    <location>
        <begin position="282"/>
        <end position="302"/>
    </location>
</feature>
<feature type="transmembrane region" description="Helical" evidence="1 3">
    <location>
        <begin position="320"/>
        <end position="340"/>
    </location>
</feature>
<feature type="transmembrane region" description="Helical" evidence="1 3">
    <location>
        <begin position="705"/>
        <end position="725"/>
    </location>
</feature>
<feature type="transmembrane region" description="Helical" evidence="1 3">
    <location>
        <begin position="745"/>
        <end position="765"/>
    </location>
</feature>
<feature type="transmembrane region" description="Helical" evidence="1 3">
    <location>
        <begin position="824"/>
        <end position="844"/>
    </location>
</feature>
<feature type="transmembrane region" description="Helical" evidence="1 3">
    <location>
        <begin position="846"/>
        <end position="866"/>
    </location>
</feature>
<feature type="transmembrane region" description="Helical" evidence="1 3">
    <location>
        <begin position="931"/>
        <end position="951"/>
    </location>
</feature>
<feature type="transmembrane region" description="Helical" evidence="1 3">
    <location>
        <begin position="955"/>
        <end position="975"/>
    </location>
</feature>
<feature type="domain" description="ABC transmembrane type-1 1" evidence="3">
    <location>
        <begin position="55"/>
        <end position="346"/>
    </location>
</feature>
<feature type="domain" description="ABC transporter 1" evidence="2">
    <location>
        <begin position="381"/>
        <end position="626"/>
    </location>
</feature>
<feature type="domain" description="ABC transmembrane type-1 2" evidence="3">
    <location>
        <begin position="705"/>
        <end position="992"/>
    </location>
</feature>
<feature type="domain" description="ABC transporter 2" evidence="2">
    <location>
        <begin position="1027"/>
        <end position="1280"/>
    </location>
</feature>
<feature type="region of interest" description="Disordered" evidence="5">
    <location>
        <begin position="1"/>
        <end position="24"/>
    </location>
</feature>
<feature type="compositionally biased region" description="Basic and acidic residues" evidence="5">
    <location>
        <begin position="1"/>
        <end position="11"/>
    </location>
</feature>
<feature type="binding site" evidence="2">
    <location>
        <begin position="416"/>
        <end position="423"/>
    </location>
    <ligand>
        <name>ATP</name>
        <dbReference type="ChEBI" id="CHEBI:30616"/>
    </ligand>
</feature>
<feature type="binding site" evidence="2">
    <location>
        <begin position="1062"/>
        <end position="1069"/>
    </location>
    <ligand>
        <name>ATP</name>
        <dbReference type="ChEBI" id="CHEBI:30616"/>
    </ligand>
</feature>
<feature type="glycosylation site" description="N-linked (GlcNAc...) asparagine" evidence="4">
    <location>
        <position position="385"/>
    </location>
</feature>
<feature type="glycosylation site" description="N-linked (GlcNAc...) asparagine" evidence="4">
    <location>
        <position position="401"/>
    </location>
</feature>
<feature type="glycosylation site" description="N-linked (GlcNAc...) asparagine" evidence="4">
    <location>
        <position position="488"/>
    </location>
</feature>
<feature type="glycosylation site" description="N-linked (GlcNAc...) asparagine" evidence="4">
    <location>
        <position position="632"/>
    </location>
</feature>
<feature type="glycosylation site" description="N-linked (GlcNAc...) asparagine" evidence="4">
    <location>
        <position position="800"/>
    </location>
</feature>
<feature type="glycosylation site" description="N-linked (GlcNAc...) asparagine" evidence="4">
    <location>
        <position position="995"/>
    </location>
</feature>
<feature type="glycosylation site" description="N-linked (GlcNAc...) asparagine" evidence="4">
    <location>
        <position position="1122"/>
    </location>
</feature>
<evidence type="ECO:0000255" key="1"/>
<evidence type="ECO:0000255" key="2">
    <source>
        <dbReference type="PROSITE-ProRule" id="PRU00434"/>
    </source>
</evidence>
<evidence type="ECO:0000255" key="3">
    <source>
        <dbReference type="PROSITE-ProRule" id="PRU00441"/>
    </source>
</evidence>
<evidence type="ECO:0000255" key="4">
    <source>
        <dbReference type="PROSITE-ProRule" id="PRU00498"/>
    </source>
</evidence>
<evidence type="ECO:0000256" key="5">
    <source>
        <dbReference type="SAM" id="MobiDB-lite"/>
    </source>
</evidence>
<evidence type="ECO:0000269" key="6">
    <source>
    </source>
</evidence>
<evidence type="ECO:0000269" key="7">
    <source>
    </source>
</evidence>
<evidence type="ECO:0000303" key="8">
    <source>
    </source>
</evidence>
<evidence type="ECO:0000305" key="9"/>
<evidence type="ECO:0000305" key="10">
    <source>
    </source>
</evidence>
<name>ATRC_EMEND</name>
<keyword id="KW-0067">ATP-binding</keyword>
<keyword id="KW-1003">Cell membrane</keyword>
<keyword id="KW-0325">Glycoprotein</keyword>
<keyword id="KW-0472">Membrane</keyword>
<keyword id="KW-0547">Nucleotide-binding</keyword>
<keyword id="KW-0677">Repeat</keyword>
<keyword id="KW-0812">Transmembrane</keyword>
<keyword id="KW-1133">Transmembrane helix</keyword>
<keyword id="KW-0813">Transport</keyword>
<protein>
    <recommendedName>
        <fullName>ABC multidrug transporter atrC</fullName>
    </recommendedName>
</protein>
<accession>Q9Y8G2</accession>
<comment type="function">
    <text evidence="6">Pleiotropic ABC efflux transporter involved in the protection of the cells against a wide range of toxic compounds.</text>
</comment>
<comment type="subcellular location">
    <subcellularLocation>
        <location evidence="10">Cell membrane</location>
        <topology evidence="1">Multi-pass membrane protein</topology>
    </subcellularLocation>
</comment>
<comment type="induction">
    <text evidence="6 7">Expression is strongly increased in the presence of cycloheximide, imazalil, itraconazole, hygromycin, and 4-nitroquinoline oxide (4-NQO).</text>
</comment>
<comment type="similarity">
    <text evidence="9">Belongs to the ABC transporter superfamily. ABCB family. Multidrug resistance exporter (TC 3.A.1.201) subfamily.</text>
</comment>
<dbReference type="EMBL" id="AF071410">
    <property type="protein sequence ID" value="AAD43625.1"/>
    <property type="molecule type" value="Genomic_DNA"/>
</dbReference>
<dbReference type="SMR" id="Q9Y8G2"/>
<dbReference type="GlyCosmos" id="Q9Y8G2">
    <property type="glycosylation" value="7 sites, No reported glycans"/>
</dbReference>
<dbReference type="GO" id="GO:0005743">
    <property type="term" value="C:mitochondrial inner membrane"/>
    <property type="evidence" value="ECO:0007669"/>
    <property type="project" value="TreeGrafter"/>
</dbReference>
<dbReference type="GO" id="GO:0005886">
    <property type="term" value="C:plasma membrane"/>
    <property type="evidence" value="ECO:0007669"/>
    <property type="project" value="UniProtKB-SubCell"/>
</dbReference>
<dbReference type="GO" id="GO:0015421">
    <property type="term" value="F:ABC-type oligopeptide transporter activity"/>
    <property type="evidence" value="ECO:0007669"/>
    <property type="project" value="TreeGrafter"/>
</dbReference>
<dbReference type="GO" id="GO:0005524">
    <property type="term" value="F:ATP binding"/>
    <property type="evidence" value="ECO:0007669"/>
    <property type="project" value="UniProtKB-KW"/>
</dbReference>
<dbReference type="GO" id="GO:0016887">
    <property type="term" value="F:ATP hydrolysis activity"/>
    <property type="evidence" value="ECO:0007669"/>
    <property type="project" value="InterPro"/>
</dbReference>
<dbReference type="GO" id="GO:0090374">
    <property type="term" value="P:oligopeptide export from mitochondrion"/>
    <property type="evidence" value="ECO:0007669"/>
    <property type="project" value="TreeGrafter"/>
</dbReference>
<dbReference type="CDD" id="cd18577">
    <property type="entry name" value="ABC_6TM_Pgp_ABCB1_D1_like"/>
    <property type="match status" value="1"/>
</dbReference>
<dbReference type="CDD" id="cd18578">
    <property type="entry name" value="ABC_6TM_Pgp_ABCB1_D2_like"/>
    <property type="match status" value="1"/>
</dbReference>
<dbReference type="CDD" id="cd03249">
    <property type="entry name" value="ABC_MTABC3_MDL1_MDL2"/>
    <property type="match status" value="1"/>
</dbReference>
<dbReference type="FunFam" id="3.40.50.300:FF:001530">
    <property type="entry name" value="ABC multidrug transporter (Eurofung)"/>
    <property type="match status" value="1"/>
</dbReference>
<dbReference type="FunFam" id="1.20.1560.10:FF:000057">
    <property type="entry name" value="ABC multidrug transporter SitT"/>
    <property type="match status" value="1"/>
</dbReference>
<dbReference type="FunFam" id="3.40.50.300:FF:000913">
    <property type="entry name" value="ABC multidrug transporter SitT"/>
    <property type="match status" value="1"/>
</dbReference>
<dbReference type="Gene3D" id="1.20.1560.10">
    <property type="entry name" value="ABC transporter type 1, transmembrane domain"/>
    <property type="match status" value="1"/>
</dbReference>
<dbReference type="Gene3D" id="3.40.50.300">
    <property type="entry name" value="P-loop containing nucleotide triphosphate hydrolases"/>
    <property type="match status" value="2"/>
</dbReference>
<dbReference type="InterPro" id="IPR003593">
    <property type="entry name" value="AAA+_ATPase"/>
</dbReference>
<dbReference type="InterPro" id="IPR011527">
    <property type="entry name" value="ABC1_TM_dom"/>
</dbReference>
<dbReference type="InterPro" id="IPR036640">
    <property type="entry name" value="ABC1_TM_sf"/>
</dbReference>
<dbReference type="InterPro" id="IPR003439">
    <property type="entry name" value="ABC_transporter-like_ATP-bd"/>
</dbReference>
<dbReference type="InterPro" id="IPR017871">
    <property type="entry name" value="ABC_transporter-like_CS"/>
</dbReference>
<dbReference type="InterPro" id="IPR027417">
    <property type="entry name" value="P-loop_NTPase"/>
</dbReference>
<dbReference type="InterPro" id="IPR039421">
    <property type="entry name" value="Type_1_exporter"/>
</dbReference>
<dbReference type="PANTHER" id="PTHR43394">
    <property type="entry name" value="ATP-DEPENDENT PERMEASE MDL1, MITOCHONDRIAL"/>
    <property type="match status" value="1"/>
</dbReference>
<dbReference type="PANTHER" id="PTHR43394:SF27">
    <property type="entry name" value="ATP-DEPENDENT TRANSLOCASE ABCB1-LIKE"/>
    <property type="match status" value="1"/>
</dbReference>
<dbReference type="Pfam" id="PF00664">
    <property type="entry name" value="ABC_membrane"/>
    <property type="match status" value="2"/>
</dbReference>
<dbReference type="Pfam" id="PF00005">
    <property type="entry name" value="ABC_tran"/>
    <property type="match status" value="2"/>
</dbReference>
<dbReference type="SMART" id="SM00382">
    <property type="entry name" value="AAA"/>
    <property type="match status" value="2"/>
</dbReference>
<dbReference type="SUPFAM" id="SSF90123">
    <property type="entry name" value="ABC transporter transmembrane region"/>
    <property type="match status" value="2"/>
</dbReference>
<dbReference type="SUPFAM" id="SSF52540">
    <property type="entry name" value="P-loop containing nucleoside triphosphate hydrolases"/>
    <property type="match status" value="2"/>
</dbReference>
<dbReference type="PROSITE" id="PS50929">
    <property type="entry name" value="ABC_TM1F"/>
    <property type="match status" value="2"/>
</dbReference>
<dbReference type="PROSITE" id="PS00211">
    <property type="entry name" value="ABC_TRANSPORTER_1"/>
    <property type="match status" value="2"/>
</dbReference>
<dbReference type="PROSITE" id="PS50893">
    <property type="entry name" value="ABC_TRANSPORTER_2"/>
    <property type="match status" value="2"/>
</dbReference>